<organism>
    <name type="scientific">Salmonella typhimurium (strain LT2 / SGSC1412 / ATCC 700720)</name>
    <dbReference type="NCBI Taxonomy" id="99287"/>
    <lineage>
        <taxon>Bacteria</taxon>
        <taxon>Pseudomonadati</taxon>
        <taxon>Pseudomonadota</taxon>
        <taxon>Gammaproteobacteria</taxon>
        <taxon>Enterobacterales</taxon>
        <taxon>Enterobacteriaceae</taxon>
        <taxon>Salmonella</taxon>
    </lineage>
</organism>
<comment type="subcellular location">
    <subcellularLocation>
        <location evidence="1">Secreted</location>
    </subcellularLocation>
</comment>
<comment type="similarity">
    <text evidence="1">Belongs to the YebF family.</text>
</comment>
<reference key="1">
    <citation type="journal article" date="2001" name="Nature">
        <title>Complete genome sequence of Salmonella enterica serovar Typhimurium LT2.</title>
        <authorList>
            <person name="McClelland M."/>
            <person name="Sanderson K.E."/>
            <person name="Spieth J."/>
            <person name="Clifton S.W."/>
            <person name="Latreille P."/>
            <person name="Courtney L."/>
            <person name="Porwollik S."/>
            <person name="Ali J."/>
            <person name="Dante M."/>
            <person name="Du F."/>
            <person name="Hou S."/>
            <person name="Layman D."/>
            <person name="Leonard S."/>
            <person name="Nguyen C."/>
            <person name="Scott K."/>
            <person name="Holmes A."/>
            <person name="Grewal N."/>
            <person name="Mulvaney E."/>
            <person name="Ryan E."/>
            <person name="Sun H."/>
            <person name="Florea L."/>
            <person name="Miller W."/>
            <person name="Stoneking T."/>
            <person name="Nhan M."/>
            <person name="Waterston R."/>
            <person name="Wilson R.K."/>
        </authorList>
    </citation>
    <scope>NUCLEOTIDE SEQUENCE [LARGE SCALE GENOMIC DNA]</scope>
    <source>
        <strain>LT2 / SGSC1412 / ATCC 700720</strain>
    </source>
</reference>
<keyword id="KW-1015">Disulfide bond</keyword>
<keyword id="KW-1185">Reference proteome</keyword>
<keyword id="KW-0964">Secreted</keyword>
<keyword id="KW-0732">Signal</keyword>
<sequence length="117" mass="12808">MNKRGALLSLLFLSASVSAFAASTESKSVKFPQCEGLDAAGIAASVKRDYQQNRIVRWADDQKKVGQADPVAWVNVQDVVGQNDKWTVPLTVRGKSADIHYQVIVDCKAGKAEYKPR</sequence>
<evidence type="ECO:0000255" key="1">
    <source>
        <dbReference type="HAMAP-Rule" id="MF_01435"/>
    </source>
</evidence>
<evidence type="ECO:0000255" key="2">
    <source>
        <dbReference type="PROSITE-ProRule" id="PRU01323"/>
    </source>
</evidence>
<protein>
    <recommendedName>
        <fullName evidence="1">Protein YebF</fullName>
    </recommendedName>
</protein>
<gene>
    <name evidence="1" type="primary">yebF</name>
    <name type="ordered locus">STM1881</name>
</gene>
<proteinExistence type="inferred from homology"/>
<dbReference type="EMBL" id="AE006468">
    <property type="protein sequence ID" value="AAL20797.1"/>
    <property type="molecule type" value="Genomic_DNA"/>
</dbReference>
<dbReference type="RefSeq" id="NP_460838.1">
    <property type="nucleotide sequence ID" value="NC_003197.2"/>
</dbReference>
<dbReference type="RefSeq" id="WP_001042119.1">
    <property type="nucleotide sequence ID" value="NC_003197.2"/>
</dbReference>
<dbReference type="SMR" id="Q8ZNW7"/>
<dbReference type="STRING" id="99287.STM1881"/>
<dbReference type="PaxDb" id="99287-STM1881"/>
<dbReference type="GeneID" id="1253402"/>
<dbReference type="KEGG" id="stm:STM1881"/>
<dbReference type="PATRIC" id="fig|99287.12.peg.1994"/>
<dbReference type="HOGENOM" id="CLU_161319_1_0_6"/>
<dbReference type="OMA" id="FPKCEGM"/>
<dbReference type="PhylomeDB" id="Q8ZNW7"/>
<dbReference type="BioCyc" id="SENT99287:STM1881-MONOMER"/>
<dbReference type="Proteomes" id="UP000001014">
    <property type="component" value="Chromosome"/>
</dbReference>
<dbReference type="GO" id="GO:0005576">
    <property type="term" value="C:extracellular region"/>
    <property type="evidence" value="ECO:0007669"/>
    <property type="project" value="UniProtKB-SubCell"/>
</dbReference>
<dbReference type="Gene3D" id="3.10.450.300">
    <property type="entry name" value="YebF/Colicin-M immunity protein"/>
    <property type="match status" value="1"/>
</dbReference>
<dbReference type="HAMAP" id="MF_01435">
    <property type="entry name" value="YebF"/>
    <property type="match status" value="1"/>
</dbReference>
<dbReference type="InterPro" id="IPR020236">
    <property type="entry name" value="Uncharacterised_YebF"/>
</dbReference>
<dbReference type="InterPro" id="IPR038703">
    <property type="entry name" value="YebF/Cmi_sf"/>
</dbReference>
<dbReference type="InterPro" id="IPR025603">
    <property type="entry name" value="YebF/ColM_immunity"/>
</dbReference>
<dbReference type="NCBIfam" id="NF010224">
    <property type="entry name" value="PRK13680.1"/>
    <property type="match status" value="1"/>
</dbReference>
<dbReference type="NCBIfam" id="NF041240">
    <property type="entry name" value="YebF_not_Cmi"/>
    <property type="match status" value="1"/>
</dbReference>
<dbReference type="Pfam" id="PF13995">
    <property type="entry name" value="YebF"/>
    <property type="match status" value="1"/>
</dbReference>
<dbReference type="PROSITE" id="PS51979">
    <property type="entry name" value="YEBF_CMI"/>
    <property type="match status" value="1"/>
</dbReference>
<accession>Q8ZNW7</accession>
<feature type="signal peptide" evidence="1">
    <location>
        <begin position="1"/>
        <end position="21"/>
    </location>
</feature>
<feature type="chain" id="PRO_0000045953" description="Protein YebF">
    <location>
        <begin position="22"/>
        <end position="117"/>
    </location>
</feature>
<feature type="domain" description="YebF/Cmi" evidence="2">
    <location>
        <begin position="30"/>
        <end position="117"/>
    </location>
</feature>
<feature type="disulfide bond" evidence="2">
    <location>
        <begin position="34"/>
        <end position="107"/>
    </location>
</feature>
<name>YEBF_SALTY</name>